<geneLocation type="chloroplast"/>
<organism>
    <name type="scientific">Crucihimalaya wallichii</name>
    <name type="common">Rock-cress</name>
    <name type="synonym">Arabidopsis campestris</name>
    <dbReference type="NCBI Taxonomy" id="78192"/>
    <lineage>
        <taxon>Eukaryota</taxon>
        <taxon>Viridiplantae</taxon>
        <taxon>Streptophyta</taxon>
        <taxon>Embryophyta</taxon>
        <taxon>Tracheophyta</taxon>
        <taxon>Spermatophyta</taxon>
        <taxon>Magnoliopsida</taxon>
        <taxon>eudicotyledons</taxon>
        <taxon>Gunneridae</taxon>
        <taxon>Pentapetalae</taxon>
        <taxon>rosids</taxon>
        <taxon>malvids</taxon>
        <taxon>Brassicales</taxon>
        <taxon>Brassicaceae</taxon>
        <taxon>Crucihimalayeae</taxon>
        <taxon>Crucihimalaya</taxon>
    </lineage>
</organism>
<keyword id="KW-0150">Chloroplast</keyword>
<keyword id="KW-0240">DNA-directed RNA polymerase</keyword>
<keyword id="KW-0548">Nucleotidyltransferase</keyword>
<keyword id="KW-0934">Plastid</keyword>
<keyword id="KW-0804">Transcription</keyword>
<keyword id="KW-0808">Transferase</keyword>
<gene>
    <name evidence="1" type="primary">rpoB</name>
</gene>
<dbReference type="EC" id="2.7.7.6" evidence="1"/>
<dbReference type="EMBL" id="AP009372">
    <property type="protein sequence ID" value="BAF50278.1"/>
    <property type="molecule type" value="Genomic_DNA"/>
</dbReference>
<dbReference type="RefSeq" id="YP_001123454.1">
    <property type="nucleotide sequence ID" value="NC_009271.1"/>
</dbReference>
<dbReference type="SMR" id="A4QKS3"/>
<dbReference type="GeneID" id="4962758"/>
<dbReference type="GO" id="GO:0009507">
    <property type="term" value="C:chloroplast"/>
    <property type="evidence" value="ECO:0007669"/>
    <property type="project" value="UniProtKB-SubCell"/>
</dbReference>
<dbReference type="GO" id="GO:0000428">
    <property type="term" value="C:DNA-directed RNA polymerase complex"/>
    <property type="evidence" value="ECO:0007669"/>
    <property type="project" value="UniProtKB-KW"/>
</dbReference>
<dbReference type="GO" id="GO:0005739">
    <property type="term" value="C:mitochondrion"/>
    <property type="evidence" value="ECO:0007669"/>
    <property type="project" value="GOC"/>
</dbReference>
<dbReference type="GO" id="GO:0003677">
    <property type="term" value="F:DNA binding"/>
    <property type="evidence" value="ECO:0007669"/>
    <property type="project" value="UniProtKB-UniRule"/>
</dbReference>
<dbReference type="GO" id="GO:0003899">
    <property type="term" value="F:DNA-directed RNA polymerase activity"/>
    <property type="evidence" value="ECO:0007669"/>
    <property type="project" value="UniProtKB-UniRule"/>
</dbReference>
<dbReference type="GO" id="GO:0032549">
    <property type="term" value="F:ribonucleoside binding"/>
    <property type="evidence" value="ECO:0007669"/>
    <property type="project" value="InterPro"/>
</dbReference>
<dbReference type="GO" id="GO:0006351">
    <property type="term" value="P:DNA-templated transcription"/>
    <property type="evidence" value="ECO:0007669"/>
    <property type="project" value="UniProtKB-UniRule"/>
</dbReference>
<dbReference type="CDD" id="cd00653">
    <property type="entry name" value="RNA_pol_B_RPB2"/>
    <property type="match status" value="1"/>
</dbReference>
<dbReference type="FunFam" id="2.40.50.150:FF:000006">
    <property type="entry name" value="DNA-directed RNA polymerase subunit beta"/>
    <property type="match status" value="1"/>
</dbReference>
<dbReference type="FunFam" id="3.90.1110.10:FF:000009">
    <property type="entry name" value="DNA-directed RNA polymerase subunit beta"/>
    <property type="match status" value="1"/>
</dbReference>
<dbReference type="Gene3D" id="2.40.50.100">
    <property type="match status" value="1"/>
</dbReference>
<dbReference type="Gene3D" id="2.40.50.150">
    <property type="match status" value="1"/>
</dbReference>
<dbReference type="Gene3D" id="3.90.1100.10">
    <property type="match status" value="1"/>
</dbReference>
<dbReference type="Gene3D" id="2.30.150.10">
    <property type="entry name" value="DNA-directed RNA polymerase, beta subunit, external 1 domain"/>
    <property type="match status" value="1"/>
</dbReference>
<dbReference type="Gene3D" id="2.40.270.10">
    <property type="entry name" value="DNA-directed RNA polymerase, subunit 2, domain 6"/>
    <property type="match status" value="2"/>
</dbReference>
<dbReference type="Gene3D" id="3.90.1800.10">
    <property type="entry name" value="RNA polymerase alpha subunit dimerisation domain"/>
    <property type="match status" value="1"/>
</dbReference>
<dbReference type="Gene3D" id="3.90.1110.10">
    <property type="entry name" value="RNA polymerase Rpb2, domain 2"/>
    <property type="match status" value="1"/>
</dbReference>
<dbReference type="HAMAP" id="MF_01321">
    <property type="entry name" value="RNApol_bact_RpoB"/>
    <property type="match status" value="1"/>
</dbReference>
<dbReference type="InterPro" id="IPR042107">
    <property type="entry name" value="DNA-dir_RNA_pol_bsu_ext_1_sf"/>
</dbReference>
<dbReference type="InterPro" id="IPR015712">
    <property type="entry name" value="DNA-dir_RNA_pol_su2"/>
</dbReference>
<dbReference type="InterPro" id="IPR007120">
    <property type="entry name" value="DNA-dir_RNAP_su2_dom"/>
</dbReference>
<dbReference type="InterPro" id="IPR037033">
    <property type="entry name" value="DNA-dir_RNAP_su2_hyb_sf"/>
</dbReference>
<dbReference type="InterPro" id="IPR010243">
    <property type="entry name" value="RNA_pol_bsu_bac"/>
</dbReference>
<dbReference type="InterPro" id="IPR007121">
    <property type="entry name" value="RNA_pol_bsu_CS"/>
</dbReference>
<dbReference type="InterPro" id="IPR007642">
    <property type="entry name" value="RNA_pol_Rpb2_2"/>
</dbReference>
<dbReference type="InterPro" id="IPR037034">
    <property type="entry name" value="RNA_pol_Rpb2_2_sf"/>
</dbReference>
<dbReference type="InterPro" id="IPR007645">
    <property type="entry name" value="RNA_pol_Rpb2_3"/>
</dbReference>
<dbReference type="InterPro" id="IPR007641">
    <property type="entry name" value="RNA_pol_Rpb2_7"/>
</dbReference>
<dbReference type="InterPro" id="IPR014724">
    <property type="entry name" value="RNA_pol_RPB2_OB-fold"/>
</dbReference>
<dbReference type="NCBIfam" id="NF001616">
    <property type="entry name" value="PRK00405.1"/>
    <property type="match status" value="1"/>
</dbReference>
<dbReference type="PANTHER" id="PTHR20856">
    <property type="entry name" value="DNA-DIRECTED RNA POLYMERASE I SUBUNIT 2"/>
    <property type="match status" value="1"/>
</dbReference>
<dbReference type="Pfam" id="PF04561">
    <property type="entry name" value="RNA_pol_Rpb2_2"/>
    <property type="match status" value="1"/>
</dbReference>
<dbReference type="Pfam" id="PF04565">
    <property type="entry name" value="RNA_pol_Rpb2_3"/>
    <property type="match status" value="1"/>
</dbReference>
<dbReference type="Pfam" id="PF00562">
    <property type="entry name" value="RNA_pol_Rpb2_6"/>
    <property type="match status" value="1"/>
</dbReference>
<dbReference type="Pfam" id="PF04560">
    <property type="entry name" value="RNA_pol_Rpb2_7"/>
    <property type="match status" value="1"/>
</dbReference>
<dbReference type="SUPFAM" id="SSF64484">
    <property type="entry name" value="beta and beta-prime subunits of DNA dependent RNA-polymerase"/>
    <property type="match status" value="1"/>
</dbReference>
<dbReference type="PROSITE" id="PS01166">
    <property type="entry name" value="RNA_POL_BETA"/>
    <property type="match status" value="1"/>
</dbReference>
<evidence type="ECO:0000255" key="1">
    <source>
        <dbReference type="HAMAP-Rule" id="MF_01321"/>
    </source>
</evidence>
<proteinExistence type="inferred from homology"/>
<name>RPOB_CRUWA</name>
<protein>
    <recommendedName>
        <fullName evidence="1">DNA-directed RNA polymerase subunit beta</fullName>
        <ecNumber evidence="1">2.7.7.6</ecNumber>
    </recommendedName>
    <alternativeName>
        <fullName evidence="1">PEP</fullName>
    </alternativeName>
    <alternativeName>
        <fullName evidence="1">Plastid-encoded RNA polymerase subunit beta</fullName>
        <shortName evidence="1">RNA polymerase subunit beta</shortName>
    </alternativeName>
</protein>
<feature type="chain" id="PRO_0000300438" description="DNA-directed RNA polymerase subunit beta">
    <location>
        <begin position="1"/>
        <end position="1072"/>
    </location>
</feature>
<accession>A4QKS3</accession>
<sequence>MLGDGKEGTSTIPGFNQIQFEGFYRFIDQGLIEELSKFPKIEDIDHEIEFQLFVETYQLVEPLIKERDAVYESLTYSSELYVSAGLIWKTSRNMEEQRIFIGNIPLMNSLGTSIVNGIYRIVINQILQSPGIYYQSELDHNGISVYTGTIISDWGGRLELEIDKKARIWARVSRKQKISILVLSSAMGLNLREILENVCYPEIFLSFLTDKEKKKIGSKENAILEFYQQFSCVGGDPIFSESLCKELQKKFFHQRCELGRIGRRNINSRLNLNIPQNNIFLLPRDILAAADHLIGMKFGMGTLDDMNHLKNKRIRSVADLLQDQLGLALARLENVVKGTISGAIRHKLIPTPQNLVTSTPLTTTYESFFGLHPLSQVLDRTNPLTQIVHGRKLSYLGPGGLTGRTANFRIRDIHPSHYGRICPIDTSEGINVGLIGSLSIHARIGDWGSLESPFYELFEKSKKARIRMLFLSPSQDEYYMIAAGNSLALNRGIQEEQAVPARYRQEFLTIAWEEVHLRSIFPFQYFSIGASLIPFIEHNDANRALMSSNMQRQAVPLSRSEKCIVGTGLERQVALDSGVPAIAEHEGKILYTDTEKIVFSSNGDTLSIPLIMYQRSNKNTCMHQKPQVRRGKCIKKGQILADGAATVGGELALGKNILVAYMPWEGYNFEDAVLISECLVYGDIYTSFHIRKYEIQTHVTTQGPERITKEIPHLEGRLLRNLDKNGIVMLGSWVETGDILVGKLTPQVAKESSYAPEDRLLRAILGIQVSTSKETCLKLPIGGRGRVIDVRWVQKKGGSSYNPEIIRVYISQKREIKVGDKVAGRHGNKGIISKILPRQDMPYLQDGRPVDMVFNPLGVPSRMNVGQIFECSLGLAGSLLDRHYRIAPFDERYEQEASRKLVFSELYEASKQTANPWVFEPEYPGKSRIFDGRTGDPFEQPVIIGKPYILKLIHQVDDKIHGRSSGHYALVTQQPLRGRSKQGGQRVGEMEVWALEGFGVAHILQEMLTYKSDHIRARQEVLGTTIIGGTIPKPEDAPESFRLLVRELRSLALELNHFLVSEKNFQINRKEV</sequence>
<reference key="1">
    <citation type="submission" date="2007-03" db="EMBL/GenBank/DDBJ databases">
        <title>Sequencing analysis of Crucihimalaya wallichii chloroplast DNA.</title>
        <authorList>
            <person name="Hosouchi T."/>
            <person name="Tsuruoka H."/>
            <person name="Kotani H."/>
        </authorList>
    </citation>
    <scope>NUCLEOTIDE SEQUENCE [LARGE SCALE GENOMIC DNA]</scope>
</reference>
<comment type="function">
    <text evidence="1">DNA-dependent RNA polymerase catalyzes the transcription of DNA into RNA using the four ribonucleoside triphosphates as substrates.</text>
</comment>
<comment type="catalytic activity">
    <reaction evidence="1">
        <text>RNA(n) + a ribonucleoside 5'-triphosphate = RNA(n+1) + diphosphate</text>
        <dbReference type="Rhea" id="RHEA:21248"/>
        <dbReference type="Rhea" id="RHEA-COMP:14527"/>
        <dbReference type="Rhea" id="RHEA-COMP:17342"/>
        <dbReference type="ChEBI" id="CHEBI:33019"/>
        <dbReference type="ChEBI" id="CHEBI:61557"/>
        <dbReference type="ChEBI" id="CHEBI:140395"/>
        <dbReference type="EC" id="2.7.7.6"/>
    </reaction>
</comment>
<comment type="subunit">
    <text evidence="1">In plastids the minimal PEP RNA polymerase catalytic core is composed of four subunits: alpha, beta, beta', and beta''. When a (nuclear-encoded) sigma factor is associated with the core the holoenzyme is formed, which can initiate transcription.</text>
</comment>
<comment type="subcellular location">
    <subcellularLocation>
        <location>Plastid</location>
        <location>Chloroplast</location>
    </subcellularLocation>
</comment>
<comment type="similarity">
    <text evidence="1">Belongs to the RNA polymerase beta chain family.</text>
</comment>